<reference key="1">
    <citation type="journal article" date="1999" name="Dev. Dyn.">
        <title>Analysis of a zebrafish semaphorin reveals potential functions in vivo.</title>
        <authorList>
            <person name="Halloran M.C."/>
            <person name="Severance S.M."/>
            <person name="Yee C.S."/>
            <person name="Gemza D.L."/>
            <person name="Raper J.A."/>
            <person name="Kuwada J.Y."/>
        </authorList>
    </citation>
    <scope>NUCLEOTIDE SEQUENCE [MRNA]</scope>
</reference>
<gene>
    <name type="primary">sema3d</name>
    <name type="synonym">sema2</name>
    <name type="synonym">semaz2</name>
</gene>
<proteinExistence type="evidence at transcript level"/>
<organism>
    <name type="scientific">Danio rerio</name>
    <name type="common">Zebrafish</name>
    <name type="synonym">Brachydanio rerio</name>
    <dbReference type="NCBI Taxonomy" id="7955"/>
    <lineage>
        <taxon>Eukaryota</taxon>
        <taxon>Metazoa</taxon>
        <taxon>Chordata</taxon>
        <taxon>Craniata</taxon>
        <taxon>Vertebrata</taxon>
        <taxon>Euteleostomi</taxon>
        <taxon>Actinopterygii</taxon>
        <taxon>Neopterygii</taxon>
        <taxon>Teleostei</taxon>
        <taxon>Ostariophysi</taxon>
        <taxon>Cypriniformes</taxon>
        <taxon>Danionidae</taxon>
        <taxon>Danioninae</taxon>
        <taxon>Danio</taxon>
    </lineage>
</organism>
<keyword id="KW-0217">Developmental protein</keyword>
<keyword id="KW-0221">Differentiation</keyword>
<keyword id="KW-1015">Disulfide bond</keyword>
<keyword id="KW-0325">Glycoprotein</keyword>
<keyword id="KW-0393">Immunoglobulin domain</keyword>
<keyword id="KW-0524">Neurogenesis</keyword>
<keyword id="KW-1185">Reference proteome</keyword>
<keyword id="KW-0964">Secreted</keyword>
<keyword id="KW-0732">Signal</keyword>
<dbReference type="EMBL" id="AF124485">
    <property type="protein sequence ID" value="AAD21310.1"/>
    <property type="molecule type" value="mRNA"/>
</dbReference>
<dbReference type="SMR" id="Q9W6G6"/>
<dbReference type="FunCoup" id="Q9W6G6">
    <property type="interactions" value="625"/>
</dbReference>
<dbReference type="STRING" id="7955.ENSDARP00000091966"/>
<dbReference type="GlyCosmos" id="Q9W6G6">
    <property type="glycosylation" value="3 sites, No reported glycans"/>
</dbReference>
<dbReference type="PaxDb" id="7955-ENSDARP00000111122"/>
<dbReference type="AGR" id="ZFIN:ZDB-GENE-990715-2"/>
<dbReference type="ZFIN" id="ZDB-GENE-990715-2">
    <property type="gene designation" value="sema3d"/>
</dbReference>
<dbReference type="eggNOG" id="KOG3611">
    <property type="taxonomic scope" value="Eukaryota"/>
</dbReference>
<dbReference type="InParanoid" id="Q9W6G6"/>
<dbReference type="PhylomeDB" id="Q9W6G6"/>
<dbReference type="PRO" id="PR:Q9W6G6"/>
<dbReference type="Proteomes" id="UP000000437">
    <property type="component" value="Unplaced"/>
</dbReference>
<dbReference type="GO" id="GO:0005615">
    <property type="term" value="C:extracellular space"/>
    <property type="evidence" value="ECO:0000318"/>
    <property type="project" value="GO_Central"/>
</dbReference>
<dbReference type="GO" id="GO:0005886">
    <property type="term" value="C:plasma membrane"/>
    <property type="evidence" value="ECO:0000318"/>
    <property type="project" value="GO_Central"/>
</dbReference>
<dbReference type="GO" id="GO:0045499">
    <property type="term" value="F:chemorepellent activity"/>
    <property type="evidence" value="ECO:0000318"/>
    <property type="project" value="GO_Central"/>
</dbReference>
<dbReference type="GO" id="GO:0038191">
    <property type="term" value="F:neuropilin binding"/>
    <property type="evidence" value="ECO:0000314"/>
    <property type="project" value="ZFIN"/>
</dbReference>
<dbReference type="GO" id="GO:0030215">
    <property type="term" value="F:semaphorin receptor binding"/>
    <property type="evidence" value="ECO:0000318"/>
    <property type="project" value="GO_Central"/>
</dbReference>
<dbReference type="GO" id="GO:0007411">
    <property type="term" value="P:axon guidance"/>
    <property type="evidence" value="ECO:0000315"/>
    <property type="project" value="ZFIN"/>
</dbReference>
<dbReference type="GO" id="GO:0007413">
    <property type="term" value="P:axonal fasciculation"/>
    <property type="evidence" value="ECO:0000315"/>
    <property type="project" value="ZFIN"/>
</dbReference>
<dbReference type="GO" id="GO:0043534">
    <property type="term" value="P:blood vessel endothelial cell migration"/>
    <property type="evidence" value="ECO:0000315"/>
    <property type="project" value="ZFIN"/>
</dbReference>
<dbReference type="GO" id="GO:0010002">
    <property type="term" value="P:cardioblast differentiation"/>
    <property type="evidence" value="ECO:0000315"/>
    <property type="project" value="ZFIN"/>
</dbReference>
<dbReference type="GO" id="GO:0051216">
    <property type="term" value="P:cartilage development"/>
    <property type="evidence" value="ECO:0000315"/>
    <property type="project" value="ZFIN"/>
</dbReference>
<dbReference type="GO" id="GO:0021534">
    <property type="term" value="P:cell proliferation in hindbrain"/>
    <property type="evidence" value="ECO:0000315"/>
    <property type="project" value="ZFIN"/>
</dbReference>
<dbReference type="GO" id="GO:0035050">
    <property type="term" value="P:embryonic heart tube development"/>
    <property type="evidence" value="ECO:0000315"/>
    <property type="project" value="ZFIN"/>
</dbReference>
<dbReference type="GO" id="GO:0060272">
    <property type="term" value="P:embryonic skeletal joint morphogenesis"/>
    <property type="evidence" value="ECO:0000315"/>
    <property type="project" value="ZFIN"/>
</dbReference>
<dbReference type="GO" id="GO:0048484">
    <property type="term" value="P:enteric nervous system development"/>
    <property type="evidence" value="ECO:0000315"/>
    <property type="project" value="ZFIN"/>
</dbReference>
<dbReference type="GO" id="GO:0031101">
    <property type="term" value="P:fin regeneration"/>
    <property type="evidence" value="ECO:0000315"/>
    <property type="project" value="ZFIN"/>
</dbReference>
<dbReference type="GO" id="GO:0007508">
    <property type="term" value="P:larval heart development"/>
    <property type="evidence" value="ECO:0000315"/>
    <property type="project" value="ZFIN"/>
</dbReference>
<dbReference type="GO" id="GO:0050919">
    <property type="term" value="P:negative chemotaxis"/>
    <property type="evidence" value="ECO:0000318"/>
    <property type="project" value="GO_Central"/>
</dbReference>
<dbReference type="GO" id="GO:0014032">
    <property type="term" value="P:neural crest cell development"/>
    <property type="evidence" value="ECO:0000315"/>
    <property type="project" value="ZFIN"/>
</dbReference>
<dbReference type="GO" id="GO:0014033">
    <property type="term" value="P:neural crest cell differentiation"/>
    <property type="evidence" value="ECO:0000315"/>
    <property type="project" value="ZFIN"/>
</dbReference>
<dbReference type="GO" id="GO:0001755">
    <property type="term" value="P:neural crest cell migration"/>
    <property type="evidence" value="ECO:0000315"/>
    <property type="project" value="ZFIN"/>
</dbReference>
<dbReference type="GO" id="GO:0071678">
    <property type="term" value="P:olfactory bulb axon guidance"/>
    <property type="evidence" value="ECO:0000315"/>
    <property type="project" value="ZFIN"/>
</dbReference>
<dbReference type="GO" id="GO:0007422">
    <property type="term" value="P:peripheral nervous system development"/>
    <property type="evidence" value="ECO:0000315"/>
    <property type="project" value="ZFIN"/>
</dbReference>
<dbReference type="GO" id="GO:0048936">
    <property type="term" value="P:peripheral nervous system neuron axonogenesis"/>
    <property type="evidence" value="ECO:0000315"/>
    <property type="project" value="ZFIN"/>
</dbReference>
<dbReference type="GO" id="GO:0030335">
    <property type="term" value="P:positive regulation of cell migration"/>
    <property type="evidence" value="ECO:0000318"/>
    <property type="project" value="GO_Central"/>
</dbReference>
<dbReference type="GO" id="GO:0030516">
    <property type="term" value="P:regulation of axon extension"/>
    <property type="evidence" value="ECO:0000315"/>
    <property type="project" value="ZFIN"/>
</dbReference>
<dbReference type="GO" id="GO:0051726">
    <property type="term" value="P:regulation of cell cycle"/>
    <property type="evidence" value="ECO:0000315"/>
    <property type="project" value="ZFIN"/>
</dbReference>
<dbReference type="GO" id="GO:0031290">
    <property type="term" value="P:retinal ganglion cell axon guidance"/>
    <property type="evidence" value="ECO:0000315"/>
    <property type="project" value="ZFIN"/>
</dbReference>
<dbReference type="GO" id="GO:0071526">
    <property type="term" value="P:semaphorin-plexin signaling pathway"/>
    <property type="evidence" value="ECO:0000318"/>
    <property type="project" value="GO_Central"/>
</dbReference>
<dbReference type="GO" id="GO:0048538">
    <property type="term" value="P:thymus development"/>
    <property type="evidence" value="ECO:0000315"/>
    <property type="project" value="ZFIN"/>
</dbReference>
<dbReference type="CDD" id="cd05871">
    <property type="entry name" value="Ig_Sema3"/>
    <property type="match status" value="1"/>
</dbReference>
<dbReference type="CDD" id="cd11252">
    <property type="entry name" value="Sema_3D"/>
    <property type="match status" value="1"/>
</dbReference>
<dbReference type="FunFam" id="2.130.10.10:FF:000015">
    <property type="entry name" value="Semaphorin 3B"/>
    <property type="match status" value="1"/>
</dbReference>
<dbReference type="FunFam" id="2.60.40.10:FF:000030">
    <property type="entry name" value="Semaphorin 3F like"/>
    <property type="match status" value="1"/>
</dbReference>
<dbReference type="FunFam" id="3.30.1680.10:FF:000001">
    <property type="entry name" value="Semaphorin 3F like"/>
    <property type="match status" value="1"/>
</dbReference>
<dbReference type="Gene3D" id="2.60.40.10">
    <property type="entry name" value="Immunoglobulins"/>
    <property type="match status" value="1"/>
</dbReference>
<dbReference type="Gene3D" id="3.30.1680.10">
    <property type="entry name" value="ligand-binding face of the semaphorins, domain 2"/>
    <property type="match status" value="1"/>
</dbReference>
<dbReference type="Gene3D" id="2.130.10.10">
    <property type="entry name" value="YVTN repeat-like/Quinoprotein amine dehydrogenase"/>
    <property type="match status" value="1"/>
</dbReference>
<dbReference type="InterPro" id="IPR036179">
    <property type="entry name" value="Ig-like_dom_sf"/>
</dbReference>
<dbReference type="InterPro" id="IPR013783">
    <property type="entry name" value="Ig-like_fold"/>
</dbReference>
<dbReference type="InterPro" id="IPR016201">
    <property type="entry name" value="PSI"/>
</dbReference>
<dbReference type="InterPro" id="IPR042582">
    <property type="entry name" value="Sema3D_Sema"/>
</dbReference>
<dbReference type="InterPro" id="IPR001627">
    <property type="entry name" value="Semap_dom"/>
</dbReference>
<dbReference type="InterPro" id="IPR036352">
    <property type="entry name" value="Semap_dom_sf"/>
</dbReference>
<dbReference type="InterPro" id="IPR027231">
    <property type="entry name" value="Semaphorin"/>
</dbReference>
<dbReference type="InterPro" id="IPR015943">
    <property type="entry name" value="WD40/YVTN_repeat-like_dom_sf"/>
</dbReference>
<dbReference type="PANTHER" id="PTHR11036">
    <property type="entry name" value="SEMAPHORIN"/>
    <property type="match status" value="1"/>
</dbReference>
<dbReference type="PANTHER" id="PTHR11036:SF36">
    <property type="entry name" value="SEMAPHORIN-3D"/>
    <property type="match status" value="1"/>
</dbReference>
<dbReference type="Pfam" id="PF01403">
    <property type="entry name" value="Sema"/>
    <property type="match status" value="1"/>
</dbReference>
<dbReference type="SMART" id="SM00423">
    <property type="entry name" value="PSI"/>
    <property type="match status" value="1"/>
</dbReference>
<dbReference type="SMART" id="SM00630">
    <property type="entry name" value="Sema"/>
    <property type="match status" value="1"/>
</dbReference>
<dbReference type="SUPFAM" id="SSF48726">
    <property type="entry name" value="Immunoglobulin"/>
    <property type="match status" value="1"/>
</dbReference>
<dbReference type="SUPFAM" id="SSF103575">
    <property type="entry name" value="Plexin repeat"/>
    <property type="match status" value="1"/>
</dbReference>
<dbReference type="SUPFAM" id="SSF101912">
    <property type="entry name" value="Sema domain"/>
    <property type="match status" value="1"/>
</dbReference>
<dbReference type="PROSITE" id="PS51004">
    <property type="entry name" value="SEMA"/>
    <property type="match status" value="1"/>
</dbReference>
<comment type="function">
    <text>May play a role in the guidance of several axon pathways.</text>
</comment>
<comment type="subcellular location">
    <subcellularLocation>
        <location evidence="1">Secreted</location>
    </subcellularLocation>
</comment>
<comment type="developmental stage">
    <text>Expressed in a dynamic and restricted pattern during the period of axon outgrowth.</text>
</comment>
<comment type="similarity">
    <text evidence="5">Belongs to the semaphorin family.</text>
</comment>
<accession>Q9W6G6</accession>
<name>SEM3D_DANRE</name>
<feature type="signal peptide" evidence="2">
    <location>
        <begin position="1"/>
        <end position="41"/>
    </location>
</feature>
<feature type="chain" id="PRO_0000032316" description="Semaphorin-3D">
    <location>
        <begin position="42"/>
        <end position="764"/>
    </location>
</feature>
<feature type="domain" description="Sema" evidence="3">
    <location>
        <begin position="48"/>
        <end position="535"/>
    </location>
</feature>
<feature type="domain" description="Ig-like C2-type">
    <location>
        <begin position="661"/>
        <end position="740"/>
    </location>
</feature>
<feature type="region of interest" description="Disordered" evidence="4">
    <location>
        <begin position="743"/>
        <end position="764"/>
    </location>
</feature>
<feature type="glycosylation site" description="N-linked (GlcNAc...) asparagine" evidence="2">
    <location>
        <position position="143"/>
    </location>
</feature>
<feature type="glycosylation site" description="N-linked (GlcNAc...) asparagine" evidence="2">
    <location>
        <position position="490"/>
    </location>
</feature>
<feature type="glycosylation site" description="N-linked (GlcNAc...) asparagine" evidence="2">
    <location>
        <position position="610"/>
    </location>
</feature>
<feature type="disulfide bond" evidence="3">
    <location>
        <begin position="121"/>
        <end position="132"/>
    </location>
</feature>
<feature type="disulfide bond" evidence="3">
    <location>
        <begin position="150"/>
        <end position="159"/>
    </location>
</feature>
<feature type="disulfide bond" evidence="3">
    <location>
        <begin position="290"/>
        <end position="402"/>
    </location>
</feature>
<feature type="disulfide bond" evidence="3">
    <location>
        <begin position="314"/>
        <end position="362"/>
    </location>
</feature>
<feature type="disulfide bond" evidence="3">
    <location>
        <begin position="538"/>
        <end position="556"/>
    </location>
</feature>
<feature type="disulfide bond" evidence="3">
    <location>
        <begin position="668"/>
        <end position="733"/>
    </location>
</feature>
<protein>
    <recommendedName>
        <fullName>Semaphorin-3D</fullName>
    </recommendedName>
    <alternativeName>
        <fullName>Semaphorin-2</fullName>
    </alternativeName>
    <alternativeName>
        <fullName>Semaphorin-Z2</fullName>
        <shortName>Sema Z2</shortName>
    </alternativeName>
</protein>
<sequence length="764" mass="87860">MKTAGEPDRRRQRRQVRTGRFSCAWWSTSVMLFFSLPEGNCMKESLPRVKLGYKDLIHSRSVVPFTGSSEGQHFQTVLLDEERSRLLLGAKDHVYLLDPDNINKHPKKLSWPASRDRVEMCILAGKNPLTECANFIRVLHSYNRTHVYACGTGAFHPTCAFLEIKGHKEDRWLLLHSNTMESGRMKCPFDPNQPFASVLTDQYLYAGTASDFLGKDSTFTRSLGPPPHQQYIRTDISEDYWINEGKFISAHPISDTYNPDDDKIYFFFREASRDGSTTDKSVLSRVARICRNDVGGLRSLTNKWTTFLKARLVCSIPGPDGVDTHFDELQDIFLLPSRDEKNPMVYGVFTTTSSIFKGSAVCVYTMEDIRAAFNGPYAHKEGPDHRWVEYEGRIPYPRPGTCPSRTYDPHIKTTKDFPDEVISFIRLHPLMYQSVHPMTGRPIFTRINTEYRLTQIIVDRVAAEDGQYAVMFLGTDMGSVLKVVSITQENWSSEEIILEELQVFKNPSPILNMEVSSKQQQLFVGGSDGLVQVSLHRCQIYGQGCAECCLARDPYCAWDGTQCSRYIPASKRRARRQDIKHGDPSSHCWDTEDVLGRNVEEKVLYGVESNSSFLECVSKSQQALIRWFVLKPGVDHRQEIKPDERVLITDRGLLIRWLQRGDAGSYFCTSQEHRFTRTLLHVSLHILDRGQINAHQPAIRESSENPAVTEPRQRYKDYLRMLSGPARSLDEYCETMWHREKKQKQKGKWKHVQELRKSRNRRHH</sequence>
<evidence type="ECO:0000250" key="1"/>
<evidence type="ECO:0000255" key="2"/>
<evidence type="ECO:0000255" key="3">
    <source>
        <dbReference type="PROSITE-ProRule" id="PRU00352"/>
    </source>
</evidence>
<evidence type="ECO:0000256" key="4">
    <source>
        <dbReference type="SAM" id="MobiDB-lite"/>
    </source>
</evidence>
<evidence type="ECO:0000305" key="5"/>